<proteinExistence type="inferred from homology"/>
<keyword id="KW-0997">Cell inner membrane</keyword>
<keyword id="KW-1003">Cell membrane</keyword>
<keyword id="KW-0444">Lipid biosynthesis</keyword>
<keyword id="KW-0443">Lipid metabolism</keyword>
<keyword id="KW-0472">Membrane</keyword>
<keyword id="KW-0594">Phospholipid biosynthesis</keyword>
<keyword id="KW-1208">Phospholipid metabolism</keyword>
<keyword id="KW-1185">Reference proteome</keyword>
<keyword id="KW-0808">Transferase</keyword>
<keyword id="KW-0812">Transmembrane</keyword>
<keyword id="KW-1133">Transmembrane helix</keyword>
<sequence>MTITALTLGMILSAYLAGSISSAVLVCRLRGLPDPRTQGSGNPGATNVLRIGGVSSAALVLFFDMLKGALPAYIAFRLGLDSVSLGIIAIAACLGHIFPIFFHFKGGKGVATAFGAMAPIGPELALLLMGSWVLMVLICRYSSLAAIVTALLAPFYTWYLDDRFVLPVAMLSALIIIRHKENIQRLLKGEESKFSRKKTPKT</sequence>
<evidence type="ECO:0000255" key="1">
    <source>
        <dbReference type="HAMAP-Rule" id="MF_01043"/>
    </source>
</evidence>
<name>PLSY_SHEWM</name>
<gene>
    <name evidence="1" type="primary">plsY</name>
    <name type="ordered locus">Swoo_1158</name>
</gene>
<reference key="1">
    <citation type="submission" date="2008-02" db="EMBL/GenBank/DDBJ databases">
        <title>Complete sequence of Shewanella woodyi ATCC 51908.</title>
        <authorList>
            <consortium name="US DOE Joint Genome Institute"/>
            <person name="Copeland A."/>
            <person name="Lucas S."/>
            <person name="Lapidus A."/>
            <person name="Glavina del Rio T."/>
            <person name="Dalin E."/>
            <person name="Tice H."/>
            <person name="Bruce D."/>
            <person name="Goodwin L."/>
            <person name="Pitluck S."/>
            <person name="Sims D."/>
            <person name="Brettin T."/>
            <person name="Detter J.C."/>
            <person name="Han C."/>
            <person name="Kuske C.R."/>
            <person name="Schmutz J."/>
            <person name="Larimer F."/>
            <person name="Land M."/>
            <person name="Hauser L."/>
            <person name="Kyrpides N."/>
            <person name="Lykidis A."/>
            <person name="Zhao J.-S."/>
            <person name="Richardson P."/>
        </authorList>
    </citation>
    <scope>NUCLEOTIDE SEQUENCE [LARGE SCALE GENOMIC DNA]</scope>
    <source>
        <strain>ATCC 51908 / MS32</strain>
    </source>
</reference>
<organism>
    <name type="scientific">Shewanella woodyi (strain ATCC 51908 / MS32)</name>
    <dbReference type="NCBI Taxonomy" id="392500"/>
    <lineage>
        <taxon>Bacteria</taxon>
        <taxon>Pseudomonadati</taxon>
        <taxon>Pseudomonadota</taxon>
        <taxon>Gammaproteobacteria</taxon>
        <taxon>Alteromonadales</taxon>
        <taxon>Shewanellaceae</taxon>
        <taxon>Shewanella</taxon>
    </lineage>
</organism>
<feature type="chain" id="PRO_1000136122" description="Glycerol-3-phosphate acyltransferase">
    <location>
        <begin position="1"/>
        <end position="202"/>
    </location>
</feature>
<feature type="transmembrane region" description="Helical" evidence="1">
    <location>
        <begin position="6"/>
        <end position="26"/>
    </location>
</feature>
<feature type="transmembrane region" description="Helical" evidence="1">
    <location>
        <begin position="56"/>
        <end position="76"/>
    </location>
</feature>
<feature type="transmembrane region" description="Helical" evidence="1">
    <location>
        <begin position="82"/>
        <end position="102"/>
    </location>
</feature>
<feature type="transmembrane region" description="Helical" evidence="1">
    <location>
        <begin position="118"/>
        <end position="138"/>
    </location>
</feature>
<feature type="transmembrane region" description="Helical" evidence="1">
    <location>
        <begin position="141"/>
        <end position="161"/>
    </location>
</feature>
<comment type="function">
    <text evidence="1">Catalyzes the transfer of an acyl group from acyl-phosphate (acyl-PO(4)) to glycerol-3-phosphate (G3P) to form lysophosphatidic acid (LPA). This enzyme utilizes acyl-phosphate as fatty acyl donor, but not acyl-CoA or acyl-ACP.</text>
</comment>
<comment type="catalytic activity">
    <reaction evidence="1">
        <text>an acyl phosphate + sn-glycerol 3-phosphate = a 1-acyl-sn-glycero-3-phosphate + phosphate</text>
        <dbReference type="Rhea" id="RHEA:34075"/>
        <dbReference type="ChEBI" id="CHEBI:43474"/>
        <dbReference type="ChEBI" id="CHEBI:57597"/>
        <dbReference type="ChEBI" id="CHEBI:57970"/>
        <dbReference type="ChEBI" id="CHEBI:59918"/>
        <dbReference type="EC" id="2.3.1.275"/>
    </reaction>
</comment>
<comment type="pathway">
    <text evidence="1">Lipid metabolism; phospholipid metabolism.</text>
</comment>
<comment type="subunit">
    <text evidence="1">Probably interacts with PlsX.</text>
</comment>
<comment type="subcellular location">
    <subcellularLocation>
        <location evidence="1">Cell inner membrane</location>
        <topology evidence="1">Multi-pass membrane protein</topology>
    </subcellularLocation>
</comment>
<comment type="similarity">
    <text evidence="1">Belongs to the PlsY family.</text>
</comment>
<accession>B1KHE3</accession>
<protein>
    <recommendedName>
        <fullName evidence="1">Glycerol-3-phosphate acyltransferase</fullName>
    </recommendedName>
    <alternativeName>
        <fullName evidence="1">Acyl-PO4 G3P acyltransferase</fullName>
    </alternativeName>
    <alternativeName>
        <fullName evidence="1">Acyl-phosphate--glycerol-3-phosphate acyltransferase</fullName>
    </alternativeName>
    <alternativeName>
        <fullName evidence="1">G3P acyltransferase</fullName>
        <shortName evidence="1">GPAT</shortName>
        <ecNumber evidence="1">2.3.1.275</ecNumber>
    </alternativeName>
    <alternativeName>
        <fullName evidence="1">Lysophosphatidic acid synthase</fullName>
        <shortName evidence="1">LPA synthase</shortName>
    </alternativeName>
</protein>
<dbReference type="EC" id="2.3.1.275" evidence="1"/>
<dbReference type="EMBL" id="CP000961">
    <property type="protein sequence ID" value="ACA85451.1"/>
    <property type="molecule type" value="Genomic_DNA"/>
</dbReference>
<dbReference type="RefSeq" id="WP_012323797.1">
    <property type="nucleotide sequence ID" value="NC_010506.1"/>
</dbReference>
<dbReference type="SMR" id="B1KHE3"/>
<dbReference type="STRING" id="392500.Swoo_1158"/>
<dbReference type="KEGG" id="swd:Swoo_1158"/>
<dbReference type="eggNOG" id="COG0344">
    <property type="taxonomic scope" value="Bacteria"/>
</dbReference>
<dbReference type="HOGENOM" id="CLU_081254_0_2_6"/>
<dbReference type="UniPathway" id="UPA00085"/>
<dbReference type="Proteomes" id="UP000002168">
    <property type="component" value="Chromosome"/>
</dbReference>
<dbReference type="GO" id="GO:0005886">
    <property type="term" value="C:plasma membrane"/>
    <property type="evidence" value="ECO:0007669"/>
    <property type="project" value="UniProtKB-SubCell"/>
</dbReference>
<dbReference type="GO" id="GO:0043772">
    <property type="term" value="F:acyl-phosphate glycerol-3-phosphate acyltransferase activity"/>
    <property type="evidence" value="ECO:0007669"/>
    <property type="project" value="UniProtKB-UniRule"/>
</dbReference>
<dbReference type="GO" id="GO:0008654">
    <property type="term" value="P:phospholipid biosynthetic process"/>
    <property type="evidence" value="ECO:0007669"/>
    <property type="project" value="UniProtKB-UniRule"/>
</dbReference>
<dbReference type="HAMAP" id="MF_01043">
    <property type="entry name" value="PlsY"/>
    <property type="match status" value="1"/>
</dbReference>
<dbReference type="InterPro" id="IPR003811">
    <property type="entry name" value="G3P_acylTferase_PlsY"/>
</dbReference>
<dbReference type="NCBIfam" id="TIGR00023">
    <property type="entry name" value="glycerol-3-phosphate 1-O-acyltransferase PlsY"/>
    <property type="match status" value="1"/>
</dbReference>
<dbReference type="PANTHER" id="PTHR30309:SF0">
    <property type="entry name" value="GLYCEROL-3-PHOSPHATE ACYLTRANSFERASE-RELATED"/>
    <property type="match status" value="1"/>
</dbReference>
<dbReference type="PANTHER" id="PTHR30309">
    <property type="entry name" value="INNER MEMBRANE PROTEIN YGIH"/>
    <property type="match status" value="1"/>
</dbReference>
<dbReference type="Pfam" id="PF02660">
    <property type="entry name" value="G3P_acyltransf"/>
    <property type="match status" value="1"/>
</dbReference>
<dbReference type="SMART" id="SM01207">
    <property type="entry name" value="G3P_acyltransf"/>
    <property type="match status" value="1"/>
</dbReference>